<feature type="chain" id="PRO_0000248584" description="Deoxyhypusine hydroxylase">
    <location>
        <begin position="1"/>
        <end position="314"/>
    </location>
</feature>
<feature type="repeat" description="HEAT-like PBS-type 1">
    <location>
        <begin position="61"/>
        <end position="87"/>
    </location>
</feature>
<feature type="repeat" description="HEAT-like PBS-type 2">
    <location>
        <begin position="94"/>
        <end position="120"/>
    </location>
</feature>
<feature type="repeat" description="HEAT-like PBS-type 3">
    <location>
        <begin position="188"/>
        <end position="214"/>
    </location>
</feature>
<feature type="repeat" description="HEAT-like PBS-type 4">
    <location>
        <begin position="219"/>
        <end position="245"/>
    </location>
</feature>
<feature type="repeat" description="HEAT-like PBS-type 5">
    <location>
        <begin position="252"/>
        <end position="278"/>
    </location>
</feature>
<feature type="binding site" evidence="1">
    <location>
        <position position="63"/>
    </location>
    <ligand>
        <name>Fe cation</name>
        <dbReference type="ChEBI" id="CHEBI:24875"/>
        <label>1</label>
    </ligand>
</feature>
<feature type="binding site" evidence="1">
    <location>
        <position position="64"/>
    </location>
    <ligand>
        <name>Fe cation</name>
        <dbReference type="ChEBI" id="CHEBI:24875"/>
        <label>1</label>
    </ligand>
</feature>
<feature type="binding site" evidence="1">
    <location>
        <position position="96"/>
    </location>
    <ligand>
        <name>Fe cation</name>
        <dbReference type="ChEBI" id="CHEBI:24875"/>
        <label>1</label>
    </ligand>
</feature>
<feature type="binding site" evidence="1">
    <location>
        <position position="97"/>
    </location>
    <ligand>
        <name>Fe cation</name>
        <dbReference type="ChEBI" id="CHEBI:24875"/>
        <label>1</label>
    </ligand>
</feature>
<feature type="binding site" evidence="1">
    <location>
        <position position="221"/>
    </location>
    <ligand>
        <name>Fe cation</name>
        <dbReference type="ChEBI" id="CHEBI:24875"/>
        <label>2</label>
    </ligand>
</feature>
<feature type="binding site" evidence="1">
    <location>
        <position position="222"/>
    </location>
    <ligand>
        <name>Fe cation</name>
        <dbReference type="ChEBI" id="CHEBI:24875"/>
        <label>2</label>
    </ligand>
</feature>
<feature type="binding site" evidence="1">
    <location>
        <position position="254"/>
    </location>
    <ligand>
        <name>Fe cation</name>
        <dbReference type="ChEBI" id="CHEBI:24875"/>
        <label>2</label>
    </ligand>
</feature>
<feature type="binding site" evidence="1">
    <location>
        <position position="255"/>
    </location>
    <ligand>
        <name>Fe cation</name>
        <dbReference type="ChEBI" id="CHEBI:24875"/>
        <label>2</label>
    </ligand>
</feature>
<feature type="modified residue" description="N-acetylmethionine" evidence="3">
    <location>
        <position position="1"/>
    </location>
</feature>
<accession>Q94JW0</accession>
<accession>Q9M2J8</accession>
<gene>
    <name type="ordered locus">At3g58180</name>
    <name type="ORF">F9D24.90</name>
</gene>
<comment type="function">
    <text evidence="1">Catalyzes the hydroxylation of the N(6)-(4-aminobutyl)-L-lysine intermediate to form hypusine, an essential post-translational modification only found in mature eIF-5A factor.</text>
</comment>
<comment type="catalytic activity">
    <reaction evidence="1">
        <text>[eIF5A protein]-deoxyhypusine + AH2 + O2 = [eIF5A protein]-hypusine + A + H2O</text>
        <dbReference type="Rhea" id="RHEA:14101"/>
        <dbReference type="Rhea" id="RHEA-COMP:10144"/>
        <dbReference type="Rhea" id="RHEA-COMP:12592"/>
        <dbReference type="ChEBI" id="CHEBI:13193"/>
        <dbReference type="ChEBI" id="CHEBI:15377"/>
        <dbReference type="ChEBI" id="CHEBI:15379"/>
        <dbReference type="ChEBI" id="CHEBI:17499"/>
        <dbReference type="ChEBI" id="CHEBI:82657"/>
        <dbReference type="ChEBI" id="CHEBI:91175"/>
        <dbReference type="EC" id="1.14.99.29"/>
    </reaction>
</comment>
<comment type="cofactor">
    <cofactor evidence="1">
        <name>Fe(2+)</name>
        <dbReference type="ChEBI" id="CHEBI:29033"/>
    </cofactor>
    <text evidence="1">Binds 2 Fe(2+) ions per subunit.</text>
</comment>
<comment type="pathway">
    <text evidence="1">Protein modification; eIF5A hypusination.</text>
</comment>
<comment type="similarity">
    <text evidence="1">Belongs to the deoxyhypusine hydroxylase family.</text>
</comment>
<comment type="sequence caution" evidence="2">
    <conflict type="erroneous gene model prediction">
        <sequence resource="EMBL-CDS" id="CAB68156"/>
    </conflict>
</comment>
<protein>
    <recommendedName>
        <fullName evidence="1">Deoxyhypusine hydroxylase</fullName>
        <shortName evidence="1">DOHH</shortName>
        <ecNumber evidence="1">1.14.99.29</ecNumber>
    </recommendedName>
    <alternativeName>
        <fullName evidence="1">Deoxyhypusine dioxygenase</fullName>
    </alternativeName>
    <alternativeName>
        <fullName evidence="1">Deoxyhypusine monooxygenase</fullName>
    </alternativeName>
</protein>
<dbReference type="EC" id="1.14.99.29" evidence="1"/>
<dbReference type="EMBL" id="AL137081">
    <property type="protein sequence ID" value="CAB68156.1"/>
    <property type="status" value="ALT_SEQ"/>
    <property type="molecule type" value="Genomic_DNA"/>
</dbReference>
<dbReference type="EMBL" id="CP002686">
    <property type="protein sequence ID" value="AEE79751.1"/>
    <property type="molecule type" value="Genomic_DNA"/>
</dbReference>
<dbReference type="EMBL" id="AF372878">
    <property type="protein sequence ID" value="AAK49594.1"/>
    <property type="molecule type" value="mRNA"/>
</dbReference>
<dbReference type="EMBL" id="AY142036">
    <property type="protein sequence ID" value="AAM98300.1"/>
    <property type="molecule type" value="mRNA"/>
</dbReference>
<dbReference type="PIR" id="T45978">
    <property type="entry name" value="T45978"/>
</dbReference>
<dbReference type="RefSeq" id="NP_567062.1">
    <property type="nucleotide sequence ID" value="NM_115680.3"/>
</dbReference>
<dbReference type="SMR" id="Q94JW0"/>
<dbReference type="FunCoup" id="Q94JW0">
    <property type="interactions" value="3608"/>
</dbReference>
<dbReference type="IntAct" id="Q94JW0">
    <property type="interactions" value="1"/>
</dbReference>
<dbReference type="STRING" id="3702.Q94JW0"/>
<dbReference type="iPTMnet" id="Q94JW0"/>
<dbReference type="PaxDb" id="3702-AT3G58180.1"/>
<dbReference type="ProteomicsDB" id="222135"/>
<dbReference type="EnsemblPlants" id="AT3G58180.1">
    <property type="protein sequence ID" value="AT3G58180.1"/>
    <property type="gene ID" value="AT3G58180"/>
</dbReference>
<dbReference type="GeneID" id="824987"/>
<dbReference type="Gramene" id="AT3G58180.1">
    <property type="protein sequence ID" value="AT3G58180.1"/>
    <property type="gene ID" value="AT3G58180"/>
</dbReference>
<dbReference type="KEGG" id="ath:AT3G58180"/>
<dbReference type="Araport" id="AT3G58180"/>
<dbReference type="TAIR" id="AT3G58180"/>
<dbReference type="eggNOG" id="KOG0567">
    <property type="taxonomic scope" value="Eukaryota"/>
</dbReference>
<dbReference type="HOGENOM" id="CLU_053974_0_0_1"/>
<dbReference type="InParanoid" id="Q94JW0"/>
<dbReference type="OMA" id="LQEPCSI"/>
<dbReference type="PhylomeDB" id="Q94JW0"/>
<dbReference type="BioCyc" id="ARA:AT3G58180-MONOMER"/>
<dbReference type="UniPathway" id="UPA00354"/>
<dbReference type="PRO" id="PR:Q94JW0"/>
<dbReference type="Proteomes" id="UP000006548">
    <property type="component" value="Chromosome 3"/>
</dbReference>
<dbReference type="ExpressionAtlas" id="Q94JW0">
    <property type="expression patterns" value="baseline and differential"/>
</dbReference>
<dbReference type="GO" id="GO:0019135">
    <property type="term" value="F:deoxyhypusine monooxygenase activity"/>
    <property type="evidence" value="ECO:0000250"/>
    <property type="project" value="UniProtKB"/>
</dbReference>
<dbReference type="GO" id="GO:0046872">
    <property type="term" value="F:metal ion binding"/>
    <property type="evidence" value="ECO:0007669"/>
    <property type="project" value="UniProtKB-KW"/>
</dbReference>
<dbReference type="GO" id="GO:0008612">
    <property type="term" value="P:peptidyl-lysine modification to peptidyl-hypusine"/>
    <property type="evidence" value="ECO:0000250"/>
    <property type="project" value="UniProtKB"/>
</dbReference>
<dbReference type="FunFam" id="1.25.10.10:FF:000099">
    <property type="entry name" value="Deoxyhypusine hydroxylase"/>
    <property type="match status" value="1"/>
</dbReference>
<dbReference type="FunFam" id="1.25.10.10:FF:000292">
    <property type="entry name" value="Deoxyhypusine hydroxylase"/>
    <property type="match status" value="1"/>
</dbReference>
<dbReference type="Gene3D" id="1.25.10.10">
    <property type="entry name" value="Leucine-rich Repeat Variant"/>
    <property type="match status" value="2"/>
</dbReference>
<dbReference type="HAMAP" id="MF_03101">
    <property type="entry name" value="Deoxyhypusine_hydroxylase"/>
    <property type="match status" value="1"/>
</dbReference>
<dbReference type="InterPro" id="IPR011989">
    <property type="entry name" value="ARM-like"/>
</dbReference>
<dbReference type="InterPro" id="IPR016024">
    <property type="entry name" value="ARM-type_fold"/>
</dbReference>
<dbReference type="InterPro" id="IPR027517">
    <property type="entry name" value="Deoxyhypusine_hydroxylase"/>
</dbReference>
<dbReference type="InterPro" id="IPR004155">
    <property type="entry name" value="PBS_lyase_HEAT"/>
</dbReference>
<dbReference type="PANTHER" id="PTHR12697:SF5">
    <property type="entry name" value="DEOXYHYPUSINE HYDROXYLASE"/>
    <property type="match status" value="1"/>
</dbReference>
<dbReference type="PANTHER" id="PTHR12697">
    <property type="entry name" value="PBS LYASE HEAT-LIKE PROTEIN"/>
    <property type="match status" value="1"/>
</dbReference>
<dbReference type="Pfam" id="PF13646">
    <property type="entry name" value="HEAT_2"/>
    <property type="match status" value="2"/>
</dbReference>
<dbReference type="Pfam" id="PF03130">
    <property type="entry name" value="HEAT_PBS"/>
    <property type="match status" value="1"/>
</dbReference>
<dbReference type="SMART" id="SM00567">
    <property type="entry name" value="EZ_HEAT"/>
    <property type="match status" value="6"/>
</dbReference>
<dbReference type="SUPFAM" id="SSF48371">
    <property type="entry name" value="ARM repeat"/>
    <property type="match status" value="1"/>
</dbReference>
<organism>
    <name type="scientific">Arabidopsis thaliana</name>
    <name type="common">Mouse-ear cress</name>
    <dbReference type="NCBI Taxonomy" id="3702"/>
    <lineage>
        <taxon>Eukaryota</taxon>
        <taxon>Viridiplantae</taxon>
        <taxon>Streptophyta</taxon>
        <taxon>Embryophyta</taxon>
        <taxon>Tracheophyta</taxon>
        <taxon>Spermatophyta</taxon>
        <taxon>Magnoliopsida</taxon>
        <taxon>eudicotyledons</taxon>
        <taxon>Gunneridae</taxon>
        <taxon>Pentapetalae</taxon>
        <taxon>rosids</taxon>
        <taxon>malvids</taxon>
        <taxon>Brassicales</taxon>
        <taxon>Brassicaceae</taxon>
        <taxon>Camelineae</taxon>
        <taxon>Arabidopsis</taxon>
    </lineage>
</organism>
<proteinExistence type="evidence at protein level"/>
<evidence type="ECO:0000255" key="1">
    <source>
        <dbReference type="HAMAP-Rule" id="MF_03101"/>
    </source>
</evidence>
<evidence type="ECO:0000305" key="2"/>
<evidence type="ECO:0007744" key="3">
    <source>
    </source>
</evidence>
<reference key="1">
    <citation type="journal article" date="2000" name="Nature">
        <title>Sequence and analysis of chromosome 3 of the plant Arabidopsis thaliana.</title>
        <authorList>
            <person name="Salanoubat M."/>
            <person name="Lemcke K."/>
            <person name="Rieger M."/>
            <person name="Ansorge W."/>
            <person name="Unseld M."/>
            <person name="Fartmann B."/>
            <person name="Valle G."/>
            <person name="Bloecker H."/>
            <person name="Perez-Alonso M."/>
            <person name="Obermaier B."/>
            <person name="Delseny M."/>
            <person name="Boutry M."/>
            <person name="Grivell L.A."/>
            <person name="Mache R."/>
            <person name="Puigdomenech P."/>
            <person name="De Simone V."/>
            <person name="Choisne N."/>
            <person name="Artiguenave F."/>
            <person name="Robert C."/>
            <person name="Brottier P."/>
            <person name="Wincker P."/>
            <person name="Cattolico L."/>
            <person name="Weissenbach J."/>
            <person name="Saurin W."/>
            <person name="Quetier F."/>
            <person name="Schaefer M."/>
            <person name="Mueller-Auer S."/>
            <person name="Gabel C."/>
            <person name="Fuchs M."/>
            <person name="Benes V."/>
            <person name="Wurmbach E."/>
            <person name="Drzonek H."/>
            <person name="Erfle H."/>
            <person name="Jordan N."/>
            <person name="Bangert S."/>
            <person name="Wiedelmann R."/>
            <person name="Kranz H."/>
            <person name="Voss H."/>
            <person name="Holland R."/>
            <person name="Brandt P."/>
            <person name="Nyakatura G."/>
            <person name="Vezzi A."/>
            <person name="D'Angelo M."/>
            <person name="Pallavicini A."/>
            <person name="Toppo S."/>
            <person name="Simionati B."/>
            <person name="Conrad A."/>
            <person name="Hornischer K."/>
            <person name="Kauer G."/>
            <person name="Loehnert T.-H."/>
            <person name="Nordsiek G."/>
            <person name="Reichelt J."/>
            <person name="Scharfe M."/>
            <person name="Schoen O."/>
            <person name="Bargues M."/>
            <person name="Terol J."/>
            <person name="Climent J."/>
            <person name="Navarro P."/>
            <person name="Collado C."/>
            <person name="Perez-Perez A."/>
            <person name="Ottenwaelder B."/>
            <person name="Duchemin D."/>
            <person name="Cooke R."/>
            <person name="Laudie M."/>
            <person name="Berger-Llauro C."/>
            <person name="Purnelle B."/>
            <person name="Masuy D."/>
            <person name="de Haan M."/>
            <person name="Maarse A.C."/>
            <person name="Alcaraz J.-P."/>
            <person name="Cottet A."/>
            <person name="Casacuberta E."/>
            <person name="Monfort A."/>
            <person name="Argiriou A."/>
            <person name="Flores M."/>
            <person name="Liguori R."/>
            <person name="Vitale D."/>
            <person name="Mannhaupt G."/>
            <person name="Haase D."/>
            <person name="Schoof H."/>
            <person name="Rudd S."/>
            <person name="Zaccaria P."/>
            <person name="Mewes H.-W."/>
            <person name="Mayer K.F.X."/>
            <person name="Kaul S."/>
            <person name="Town C.D."/>
            <person name="Koo H.L."/>
            <person name="Tallon L.J."/>
            <person name="Jenkins J."/>
            <person name="Rooney T."/>
            <person name="Rizzo M."/>
            <person name="Walts A."/>
            <person name="Utterback T."/>
            <person name="Fujii C.Y."/>
            <person name="Shea T.P."/>
            <person name="Creasy T.H."/>
            <person name="Haas B."/>
            <person name="Maiti R."/>
            <person name="Wu D."/>
            <person name="Peterson J."/>
            <person name="Van Aken S."/>
            <person name="Pai G."/>
            <person name="Militscher J."/>
            <person name="Sellers P."/>
            <person name="Gill J.E."/>
            <person name="Feldblyum T.V."/>
            <person name="Preuss D."/>
            <person name="Lin X."/>
            <person name="Nierman W.C."/>
            <person name="Salzberg S.L."/>
            <person name="White O."/>
            <person name="Venter J.C."/>
            <person name="Fraser C.M."/>
            <person name="Kaneko T."/>
            <person name="Nakamura Y."/>
            <person name="Sato S."/>
            <person name="Kato T."/>
            <person name="Asamizu E."/>
            <person name="Sasamoto S."/>
            <person name="Kimura T."/>
            <person name="Idesawa K."/>
            <person name="Kawashima K."/>
            <person name="Kishida Y."/>
            <person name="Kiyokawa C."/>
            <person name="Kohara M."/>
            <person name="Matsumoto M."/>
            <person name="Matsuno A."/>
            <person name="Muraki A."/>
            <person name="Nakayama S."/>
            <person name="Nakazaki N."/>
            <person name="Shinpo S."/>
            <person name="Takeuchi C."/>
            <person name="Wada T."/>
            <person name="Watanabe A."/>
            <person name="Yamada M."/>
            <person name="Yasuda M."/>
            <person name="Tabata S."/>
        </authorList>
    </citation>
    <scope>NUCLEOTIDE SEQUENCE [LARGE SCALE GENOMIC DNA]</scope>
    <source>
        <strain>cv. Columbia</strain>
    </source>
</reference>
<reference key="2">
    <citation type="journal article" date="2017" name="Plant J.">
        <title>Araport11: a complete reannotation of the Arabidopsis thaliana reference genome.</title>
        <authorList>
            <person name="Cheng C.Y."/>
            <person name="Krishnakumar V."/>
            <person name="Chan A.P."/>
            <person name="Thibaud-Nissen F."/>
            <person name="Schobel S."/>
            <person name="Town C.D."/>
        </authorList>
    </citation>
    <scope>GENOME REANNOTATION</scope>
    <source>
        <strain>cv. Columbia</strain>
    </source>
</reference>
<reference key="3">
    <citation type="journal article" date="2003" name="Science">
        <title>Empirical analysis of transcriptional activity in the Arabidopsis genome.</title>
        <authorList>
            <person name="Yamada K."/>
            <person name="Lim J."/>
            <person name="Dale J.M."/>
            <person name="Chen H."/>
            <person name="Shinn P."/>
            <person name="Palm C.J."/>
            <person name="Southwick A.M."/>
            <person name="Wu H.C."/>
            <person name="Kim C.J."/>
            <person name="Nguyen M."/>
            <person name="Pham P.K."/>
            <person name="Cheuk R.F."/>
            <person name="Karlin-Newmann G."/>
            <person name="Liu S.X."/>
            <person name="Lam B."/>
            <person name="Sakano H."/>
            <person name="Wu T."/>
            <person name="Yu G."/>
            <person name="Miranda M."/>
            <person name="Quach H.L."/>
            <person name="Tripp M."/>
            <person name="Chang C.H."/>
            <person name="Lee J.M."/>
            <person name="Toriumi M.J."/>
            <person name="Chan M.M."/>
            <person name="Tang C.C."/>
            <person name="Onodera C.S."/>
            <person name="Deng J.M."/>
            <person name="Akiyama K."/>
            <person name="Ansari Y."/>
            <person name="Arakawa T."/>
            <person name="Banh J."/>
            <person name="Banno F."/>
            <person name="Bowser L."/>
            <person name="Brooks S.Y."/>
            <person name="Carninci P."/>
            <person name="Chao Q."/>
            <person name="Choy N."/>
            <person name="Enju A."/>
            <person name="Goldsmith A.D."/>
            <person name="Gurjal M."/>
            <person name="Hansen N.F."/>
            <person name="Hayashizaki Y."/>
            <person name="Johnson-Hopson C."/>
            <person name="Hsuan V.W."/>
            <person name="Iida K."/>
            <person name="Karnes M."/>
            <person name="Khan S."/>
            <person name="Koesema E."/>
            <person name="Ishida J."/>
            <person name="Jiang P.X."/>
            <person name="Jones T."/>
            <person name="Kawai J."/>
            <person name="Kamiya A."/>
            <person name="Meyers C."/>
            <person name="Nakajima M."/>
            <person name="Narusaka M."/>
            <person name="Seki M."/>
            <person name="Sakurai T."/>
            <person name="Satou M."/>
            <person name="Tamse R."/>
            <person name="Vaysberg M."/>
            <person name="Wallender E.K."/>
            <person name="Wong C."/>
            <person name="Yamamura Y."/>
            <person name="Yuan S."/>
            <person name="Shinozaki K."/>
            <person name="Davis R.W."/>
            <person name="Theologis A."/>
            <person name="Ecker J.R."/>
        </authorList>
    </citation>
    <scope>NUCLEOTIDE SEQUENCE [LARGE SCALE MRNA]</scope>
    <source>
        <strain>cv. Columbia</strain>
    </source>
</reference>
<reference key="4">
    <citation type="journal article" date="2012" name="Mol. Cell. Proteomics">
        <title>Comparative large-scale characterisation of plant vs. mammal proteins reveals similar and idiosyncratic N-alpha acetylation features.</title>
        <authorList>
            <person name="Bienvenut W.V."/>
            <person name="Sumpton D."/>
            <person name="Martinez A."/>
            <person name="Lilla S."/>
            <person name="Espagne C."/>
            <person name="Meinnel T."/>
            <person name="Giglione C."/>
        </authorList>
    </citation>
    <scope>ACETYLATION [LARGE SCALE ANALYSIS] AT MET-1</scope>
    <scope>IDENTIFICATION BY MASS SPECTROMETRY [LARGE SCALE ANALYSIS]</scope>
</reference>
<sequence length="314" mass="34092">MESNGSVSSMVNLEKFLCERLVDQSQPISERFRALFSLRNLKGPGPRNALILASRDSSNLLAHEAAFALGQMQDAEAIPALESVLNDMSLHPIVRHEAAEALGAIGLAGNVNILKKSLSSDPAQEVRETCELALKRIEDMSNVDAENQSSTTEKSPFMSVDPAGPAASFSSVHQLRQVLLDETKGMYERYAALFALRNHGGEEAVSAIVDSLSASSALLRHEVAYVLGQLQSKTALATLSKVLRDVNEHPMVRHEAAEALGSIADEQSIALLEEFSKDPEPIVAQSCEVALSMLEFENSGKSFEFFFTQDPLVH</sequence>
<name>DOHH_ARATH</name>
<keyword id="KW-0007">Acetylation</keyword>
<keyword id="KW-0386">Hypusine biosynthesis</keyword>
<keyword id="KW-0408">Iron</keyword>
<keyword id="KW-0479">Metal-binding</keyword>
<keyword id="KW-0503">Monooxygenase</keyword>
<keyword id="KW-0560">Oxidoreductase</keyword>
<keyword id="KW-1185">Reference proteome</keyword>
<keyword id="KW-0677">Repeat</keyword>